<protein>
    <recommendedName>
        <fullName evidence="1">UvrABC system protein C</fullName>
        <shortName evidence="1">Protein UvrC</shortName>
    </recommendedName>
    <alternativeName>
        <fullName evidence="1">Excinuclease ABC subunit C</fullName>
    </alternativeName>
</protein>
<dbReference type="EMBL" id="AL157959">
    <property type="protein sequence ID" value="CAM08686.1"/>
    <property type="status" value="ALT_INIT"/>
    <property type="molecule type" value="Genomic_DNA"/>
</dbReference>
<dbReference type="RefSeq" id="WP_002246968.1">
    <property type="nucleotide sequence ID" value="NC_003116.1"/>
</dbReference>
<dbReference type="SMR" id="Q9JU21"/>
<dbReference type="EnsemblBacteria" id="CAM08686">
    <property type="protein sequence ID" value="CAM08686"/>
    <property type="gene ID" value="NMA1540"/>
</dbReference>
<dbReference type="KEGG" id="nma:NMA1540"/>
<dbReference type="HOGENOM" id="CLU_014841_3_0_4"/>
<dbReference type="Proteomes" id="UP000000626">
    <property type="component" value="Chromosome"/>
</dbReference>
<dbReference type="GO" id="GO:0005737">
    <property type="term" value="C:cytoplasm"/>
    <property type="evidence" value="ECO:0007669"/>
    <property type="project" value="UniProtKB-SubCell"/>
</dbReference>
<dbReference type="GO" id="GO:0009380">
    <property type="term" value="C:excinuclease repair complex"/>
    <property type="evidence" value="ECO:0007669"/>
    <property type="project" value="InterPro"/>
</dbReference>
<dbReference type="GO" id="GO:0003677">
    <property type="term" value="F:DNA binding"/>
    <property type="evidence" value="ECO:0007669"/>
    <property type="project" value="UniProtKB-UniRule"/>
</dbReference>
<dbReference type="GO" id="GO:0009381">
    <property type="term" value="F:excinuclease ABC activity"/>
    <property type="evidence" value="ECO:0007669"/>
    <property type="project" value="UniProtKB-UniRule"/>
</dbReference>
<dbReference type="GO" id="GO:0006289">
    <property type="term" value="P:nucleotide-excision repair"/>
    <property type="evidence" value="ECO:0007669"/>
    <property type="project" value="UniProtKB-UniRule"/>
</dbReference>
<dbReference type="GO" id="GO:0009432">
    <property type="term" value="P:SOS response"/>
    <property type="evidence" value="ECO:0007669"/>
    <property type="project" value="UniProtKB-UniRule"/>
</dbReference>
<dbReference type="CDD" id="cd10434">
    <property type="entry name" value="GIY-YIG_UvrC_Cho"/>
    <property type="match status" value="1"/>
</dbReference>
<dbReference type="FunFam" id="1.10.150.20:FF:000005">
    <property type="entry name" value="UvrABC system protein C"/>
    <property type="match status" value="1"/>
</dbReference>
<dbReference type="FunFam" id="3.30.420.340:FF:000001">
    <property type="entry name" value="UvrABC system protein C"/>
    <property type="match status" value="1"/>
</dbReference>
<dbReference type="FunFam" id="3.40.1440.10:FF:000001">
    <property type="entry name" value="UvrABC system protein C"/>
    <property type="match status" value="1"/>
</dbReference>
<dbReference type="FunFam" id="4.10.860.10:FF:000002">
    <property type="entry name" value="UvrABC system protein C"/>
    <property type="match status" value="1"/>
</dbReference>
<dbReference type="Gene3D" id="1.10.150.20">
    <property type="entry name" value="5' to 3' exonuclease, C-terminal subdomain"/>
    <property type="match status" value="1"/>
</dbReference>
<dbReference type="Gene3D" id="3.40.1440.10">
    <property type="entry name" value="GIY-YIG endonuclease"/>
    <property type="match status" value="1"/>
</dbReference>
<dbReference type="Gene3D" id="4.10.860.10">
    <property type="entry name" value="UVR domain"/>
    <property type="match status" value="1"/>
</dbReference>
<dbReference type="Gene3D" id="3.30.420.340">
    <property type="entry name" value="UvrC, RNAse H endonuclease domain"/>
    <property type="match status" value="1"/>
</dbReference>
<dbReference type="HAMAP" id="MF_00203">
    <property type="entry name" value="UvrC"/>
    <property type="match status" value="1"/>
</dbReference>
<dbReference type="InterPro" id="IPR000305">
    <property type="entry name" value="GIY-YIG_endonuc"/>
</dbReference>
<dbReference type="InterPro" id="IPR035901">
    <property type="entry name" value="GIY-YIG_endonuc_sf"/>
</dbReference>
<dbReference type="InterPro" id="IPR047296">
    <property type="entry name" value="GIY-YIG_UvrC_Cho"/>
</dbReference>
<dbReference type="InterPro" id="IPR003583">
    <property type="entry name" value="Hlx-hairpin-Hlx_DNA-bd_motif"/>
</dbReference>
<dbReference type="InterPro" id="IPR010994">
    <property type="entry name" value="RuvA_2-like"/>
</dbReference>
<dbReference type="InterPro" id="IPR001943">
    <property type="entry name" value="UVR_dom"/>
</dbReference>
<dbReference type="InterPro" id="IPR036876">
    <property type="entry name" value="UVR_dom_sf"/>
</dbReference>
<dbReference type="InterPro" id="IPR050066">
    <property type="entry name" value="UvrABC_protein_C"/>
</dbReference>
<dbReference type="InterPro" id="IPR004791">
    <property type="entry name" value="UvrC"/>
</dbReference>
<dbReference type="InterPro" id="IPR001162">
    <property type="entry name" value="UvrC_RNase_H_dom"/>
</dbReference>
<dbReference type="InterPro" id="IPR038476">
    <property type="entry name" value="UvrC_RNase_H_dom_sf"/>
</dbReference>
<dbReference type="NCBIfam" id="NF001824">
    <property type="entry name" value="PRK00558.1-5"/>
    <property type="match status" value="1"/>
</dbReference>
<dbReference type="NCBIfam" id="TIGR00194">
    <property type="entry name" value="uvrC"/>
    <property type="match status" value="1"/>
</dbReference>
<dbReference type="PANTHER" id="PTHR30562:SF1">
    <property type="entry name" value="UVRABC SYSTEM PROTEIN C"/>
    <property type="match status" value="1"/>
</dbReference>
<dbReference type="PANTHER" id="PTHR30562">
    <property type="entry name" value="UVRC/OXIDOREDUCTASE"/>
    <property type="match status" value="1"/>
</dbReference>
<dbReference type="Pfam" id="PF01541">
    <property type="entry name" value="GIY-YIG"/>
    <property type="match status" value="1"/>
</dbReference>
<dbReference type="Pfam" id="PF14520">
    <property type="entry name" value="HHH_5"/>
    <property type="match status" value="1"/>
</dbReference>
<dbReference type="Pfam" id="PF02151">
    <property type="entry name" value="UVR"/>
    <property type="match status" value="1"/>
</dbReference>
<dbReference type="Pfam" id="PF22920">
    <property type="entry name" value="UvrC_RNaseH"/>
    <property type="match status" value="1"/>
</dbReference>
<dbReference type="Pfam" id="PF08459">
    <property type="entry name" value="UvrC_RNaseH_dom"/>
    <property type="match status" value="1"/>
</dbReference>
<dbReference type="SMART" id="SM00465">
    <property type="entry name" value="GIYc"/>
    <property type="match status" value="1"/>
</dbReference>
<dbReference type="SMART" id="SM00278">
    <property type="entry name" value="HhH1"/>
    <property type="match status" value="2"/>
</dbReference>
<dbReference type="SUPFAM" id="SSF46600">
    <property type="entry name" value="C-terminal UvrC-binding domain of UvrB"/>
    <property type="match status" value="1"/>
</dbReference>
<dbReference type="SUPFAM" id="SSF82771">
    <property type="entry name" value="GIY-YIG endonuclease"/>
    <property type="match status" value="1"/>
</dbReference>
<dbReference type="SUPFAM" id="SSF47781">
    <property type="entry name" value="RuvA domain 2-like"/>
    <property type="match status" value="1"/>
</dbReference>
<dbReference type="PROSITE" id="PS50164">
    <property type="entry name" value="GIY_YIG"/>
    <property type="match status" value="1"/>
</dbReference>
<dbReference type="PROSITE" id="PS50151">
    <property type="entry name" value="UVR"/>
    <property type="match status" value="1"/>
</dbReference>
<dbReference type="PROSITE" id="PS50165">
    <property type="entry name" value="UVRC"/>
    <property type="match status" value="1"/>
</dbReference>
<reference key="1">
    <citation type="journal article" date="2000" name="Nature">
        <title>Complete DNA sequence of a serogroup A strain of Neisseria meningitidis Z2491.</title>
        <authorList>
            <person name="Parkhill J."/>
            <person name="Achtman M."/>
            <person name="James K.D."/>
            <person name="Bentley S.D."/>
            <person name="Churcher C.M."/>
            <person name="Klee S.R."/>
            <person name="Morelli G."/>
            <person name="Basham D."/>
            <person name="Brown D."/>
            <person name="Chillingworth T."/>
            <person name="Davies R.M."/>
            <person name="Davis P."/>
            <person name="Devlin K."/>
            <person name="Feltwell T."/>
            <person name="Hamlin N."/>
            <person name="Holroyd S."/>
            <person name="Jagels K."/>
            <person name="Leather S."/>
            <person name="Moule S."/>
            <person name="Mungall K.L."/>
            <person name="Quail M.A."/>
            <person name="Rajandream M.A."/>
            <person name="Rutherford K.M."/>
            <person name="Simmonds M."/>
            <person name="Skelton J."/>
            <person name="Whitehead S."/>
            <person name="Spratt B.G."/>
            <person name="Barrell B.G."/>
        </authorList>
    </citation>
    <scope>NUCLEOTIDE SEQUENCE [LARGE SCALE GENOMIC DNA]</scope>
    <source>
        <strain>DSM 15465 / Z2491</strain>
    </source>
</reference>
<evidence type="ECO:0000255" key="1">
    <source>
        <dbReference type="HAMAP-Rule" id="MF_00203"/>
    </source>
</evidence>
<evidence type="ECO:0000305" key="2"/>
<sequence length="617" mass="69849">MNTENRSPEQFDIPLFLKNLPKLPGVYRFFDEGGKVLYVGKAVNLKRRVSGYFQKNDHSPRIALMVKQVHHIETTITRSEAEALILENNFIKALSPKYNILFRDDKSYPYLMLSGHQYPQMAYYRGTLKKPNQYFGPYPNSNAVRDSIQILQKVFMLRTCEDSVFEHRDRPCLLYQIKRCTAPCVGHISEEDYRDSVRQAATFLNGKTDELTRTLQHKMQTAAANLQFEEAARYRDQIQALGIMQSNQFIDSKNPNNPNDIDLLALAVSDGLVCVHWVSIRGGRHVGDKSFFPDTKNDPEPNGQDYAEAFVAQHYLGKSKPDIIINNFPVPDALKEALEGEHGKQMQFVTKTIGERKVWLKMAEQNAQMAIAQRRLQQSNQQHRIDELAKILGMDSDGLNRLECFDISHTQGEATIASCVVYDEQNIQPSQYRRYNITTAKPGDDYAAMREVLTRRYGKMQEAEANGETVKWPDAVLIDGGKGQIGIAVSVWEELGLHIPLVGIAKGPERKAGMEELILPFTGEVFRLPPNSPALHLLQTVRDESHRFAITGHRKKRDKARVTSSLSDIPGVGSKRRQALLTRFGGLRGVIAASREDLEKVEGISKALAETIYEHLH</sequence>
<keyword id="KW-0963">Cytoplasm</keyword>
<keyword id="KW-0227">DNA damage</keyword>
<keyword id="KW-0228">DNA excision</keyword>
<keyword id="KW-0234">DNA repair</keyword>
<keyword id="KW-0267">Excision nuclease</keyword>
<keyword id="KW-0742">SOS response</keyword>
<organism>
    <name type="scientific">Neisseria meningitidis serogroup A / serotype 4A (strain DSM 15465 / Z2491)</name>
    <dbReference type="NCBI Taxonomy" id="122587"/>
    <lineage>
        <taxon>Bacteria</taxon>
        <taxon>Pseudomonadati</taxon>
        <taxon>Pseudomonadota</taxon>
        <taxon>Betaproteobacteria</taxon>
        <taxon>Neisseriales</taxon>
        <taxon>Neisseriaceae</taxon>
        <taxon>Neisseria</taxon>
    </lineage>
</organism>
<proteinExistence type="inferred from homology"/>
<feature type="chain" id="PRO_0000138322" description="UvrABC system protein C">
    <location>
        <begin position="1"/>
        <end position="617"/>
    </location>
</feature>
<feature type="domain" description="GIY-YIG" evidence="1">
    <location>
        <begin position="22"/>
        <end position="100"/>
    </location>
</feature>
<feature type="domain" description="UVR" evidence="1">
    <location>
        <begin position="209"/>
        <end position="244"/>
    </location>
</feature>
<comment type="function">
    <text evidence="1">The UvrABC repair system catalyzes the recognition and processing of DNA lesions. UvrC both incises the 5' and 3' sides of the lesion. The N-terminal half is responsible for the 3' incision and the C-terminal half is responsible for the 5' incision.</text>
</comment>
<comment type="subunit">
    <text evidence="1">Interacts with UvrB in an incision complex.</text>
</comment>
<comment type="subcellular location">
    <subcellularLocation>
        <location evidence="1">Cytoplasm</location>
    </subcellularLocation>
</comment>
<comment type="similarity">
    <text evidence="1">Belongs to the UvrC family.</text>
</comment>
<comment type="sequence caution" evidence="2">
    <conflict type="erroneous initiation">
        <sequence resource="EMBL-CDS" id="CAM08686"/>
    </conflict>
</comment>
<name>UVRC_NEIMA</name>
<accession>Q9JU21</accession>
<accession>A1ISD0</accession>
<gene>
    <name evidence="1" type="primary">uvrC</name>
    <name type="ordered locus">NMA1540</name>
</gene>